<gene>
    <name evidence="2" type="primary">E</name>
</gene>
<evidence type="ECO:0000269" key="1">
    <source>
    </source>
</evidence>
<evidence type="ECO:0000303" key="2">
    <source>
    </source>
</evidence>
<evidence type="ECO:0000305" key="3"/>
<evidence type="ECO:0000312" key="4">
    <source>
        <dbReference type="Proteomes" id="UP000009092"/>
    </source>
</evidence>
<reference evidence="4" key="1">
    <citation type="submission" date="1998-05" db="EMBL/GenBank/DDBJ databases">
        <title>The complete genome of bacteriophage P2.</title>
        <authorList>
            <person name="Christie G.E."/>
            <person name="Haggard-Ljungquist E."/>
            <person name="Calendar R."/>
        </authorList>
    </citation>
    <scope>NUCLEOTIDE SEQUENCE [LARGE SCALE GENOMIC DNA]</scope>
</reference>
<reference key="2">
    <citation type="journal article" date="2002" name="J. Bacteriol.">
        <title>Programmed translational frameshift in the bacteriophage P2 FETUD tail gene operon.</title>
        <authorList>
            <person name="Christie G.E."/>
            <person name="Temple L.M."/>
            <person name="Bartlett B.A."/>
            <person name="Goodwin T.S."/>
        </authorList>
    </citation>
    <scope>RIBOSOMAL FRAMESHIFT</scope>
    <scope>IDENTIFICATION</scope>
</reference>
<protein>
    <recommendedName>
        <fullName evidence="3">Tail assembly protein E</fullName>
    </recommendedName>
    <alternativeName>
        <fullName evidence="2">Gene product E</fullName>
        <shortName evidence="2">gpE</shortName>
    </alternativeName>
    <alternativeName>
        <fullName evidence="3">Tail assembly chaperone</fullName>
        <shortName>TAC</shortName>
    </alternativeName>
</protein>
<accession>O64313</accession>
<sequence length="91" mass="9637">MNKENVITLDNPVKRGEQVIEQVTLMKPSAGTLRGVSLAAVANSEVDALIKVLPRMTAPMLTEQEVAALELPDLVALAGKVVGFLSPNSVQ</sequence>
<comment type="function">
    <text evidence="3">Promotes tail assembly by creating a scaffold for the tail tube proteins. Tail assembly proteins E and E' would wrap the linear tape measure protein to create a tail assembly scaffold.</text>
</comment>
<comment type="alternative products">
    <event type="ribosomal frameshifting"/>
    <isoform>
        <id>O64313-1</id>
        <name>Tail assembly protein E</name>
        <sequence type="displayed"/>
    </isoform>
    <isoform>
        <id>O64312-1</id>
        <name>Tail assembly protein E'</name>
        <sequence type="external"/>
    </isoform>
</comment>
<comment type="miscellaneous">
    <molecule>Isoform Tail assembly protein E</molecule>
    <text evidence="1">Produced by conventional translation.</text>
</comment>
<comment type="similarity">
    <text evidence="3">Belongs to the mulikevirus tail assembly protein family.</text>
</comment>
<keyword id="KW-0426">Late protein</keyword>
<keyword id="KW-1185">Reference proteome</keyword>
<keyword id="KW-0688">Ribosomal frameshifting</keyword>
<keyword id="KW-1188">Viral release from host cell</keyword>
<keyword id="KW-1245">Viral tail assembly</keyword>
<organism>
    <name type="scientific">Escherichia phage P2</name>
    <name type="common">Bacteriophage P2</name>
    <dbReference type="NCBI Taxonomy" id="2905681"/>
    <lineage>
        <taxon>Viruses</taxon>
        <taxon>Duplodnaviria</taxon>
        <taxon>Heunggongvirae</taxon>
        <taxon>Uroviricota</taxon>
        <taxon>Caudoviricetes</taxon>
        <taxon>Peduoviridae</taxon>
        <taxon>Peduovirus</taxon>
        <taxon>Peduovirus P2</taxon>
    </lineage>
</organism>
<dbReference type="EMBL" id="AF063097">
    <property type="protein sequence ID" value="AAD03291.1"/>
    <property type="molecule type" value="Genomic_DNA"/>
</dbReference>
<dbReference type="RefSeq" id="NP_046781.1">
    <molecule id="O64313-1"/>
    <property type="nucleotide sequence ID" value="NC_001895.1"/>
</dbReference>
<dbReference type="GeneID" id="77440816"/>
<dbReference type="KEGG" id="vg:77440816"/>
<dbReference type="Proteomes" id="UP000009092">
    <property type="component" value="Genome"/>
</dbReference>
<dbReference type="GO" id="GO:0098003">
    <property type="term" value="P:viral tail assembly"/>
    <property type="evidence" value="ECO:0007669"/>
    <property type="project" value="UniProtKB-KW"/>
</dbReference>
<dbReference type="GO" id="GO:0075523">
    <property type="term" value="P:viral translational frameshifting"/>
    <property type="evidence" value="ECO:0007669"/>
    <property type="project" value="UniProtKB-KW"/>
</dbReference>
<dbReference type="InterPro" id="IPR019289">
    <property type="entry name" value="Phage_tail_E/E"/>
</dbReference>
<dbReference type="Pfam" id="PF10109">
    <property type="entry name" value="Phage_TAC_7"/>
    <property type="match status" value="1"/>
</dbReference>
<organismHost>
    <name type="scientific">Enterobacteriaceae</name>
    <dbReference type="NCBI Taxonomy" id="543"/>
</organismHost>
<name>TAP_BPP2</name>
<feature type="chain" id="PRO_0000432950" description="Tail assembly protein E">
    <location>
        <begin position="1"/>
        <end position="91"/>
    </location>
</feature>
<proteinExistence type="inferred from homology"/>